<feature type="chain" id="PRO_0000445631" description="Salt tolerance receptor-like cytoplasmic kinase 1">
    <location>
        <begin position="1"/>
        <end position="361"/>
    </location>
</feature>
<feature type="domain" description="Protein kinase" evidence="1">
    <location>
        <begin position="67"/>
        <end position="347"/>
    </location>
</feature>
<feature type="active site" description="Proton acceptor" evidence="1">
    <location>
        <position position="195"/>
    </location>
</feature>
<feature type="binding site" evidence="1">
    <location>
        <begin position="73"/>
        <end position="81"/>
    </location>
    <ligand>
        <name>ATP</name>
        <dbReference type="ChEBI" id="CHEBI:30616"/>
    </ligand>
</feature>
<feature type="binding site" evidence="1">
    <location>
        <position position="95"/>
    </location>
    <ligand>
        <name>ATP</name>
        <dbReference type="ChEBI" id="CHEBI:30616"/>
    </ligand>
</feature>
<feature type="lipid moiety-binding region" description="S-palmitoyl cysteine" evidence="4">
    <location>
        <position position="5"/>
    </location>
</feature>
<feature type="lipid moiety-binding region" description="S-palmitoyl cysteine" evidence="4">
    <location>
        <position position="10"/>
    </location>
</feature>
<feature type="lipid moiety-binding region" description="S-palmitoyl cysteine" evidence="4">
    <location>
        <position position="14"/>
    </location>
</feature>
<feature type="mutagenesis site" description="Abnormal cytoplasmic localization and reduced salt tolerance; when associated with A-5 and A-14." evidence="3 4">
    <original>C</original>
    <variation>A</variation>
    <location>
        <position position="5"/>
    </location>
</feature>
<feature type="mutagenesis site" description="Abnormal cytoplasmic localization and reduced salt tolerance; when associated with A-10 and A-14." evidence="3 4">
    <original>C</original>
    <variation>A</variation>
    <location>
        <position position="10"/>
    </location>
</feature>
<feature type="mutagenesis site" description="Abnormal cytoplasmic localization and reduced salt tolerance; when associated with A-5 and A-10." evidence="3 4">
    <original>C</original>
    <variation>A</variation>
    <location>
        <position position="14"/>
    </location>
</feature>
<feature type="mutagenesis site" description="Loss of kinase activity." evidence="3">
    <original>K</original>
    <variation>E</variation>
    <location>
        <position position="95"/>
    </location>
</feature>
<organism>
    <name type="scientific">Oryza sativa subsp. japonica</name>
    <name type="common">Rice</name>
    <dbReference type="NCBI Taxonomy" id="39947"/>
    <lineage>
        <taxon>Eukaryota</taxon>
        <taxon>Viridiplantae</taxon>
        <taxon>Streptophyta</taxon>
        <taxon>Embryophyta</taxon>
        <taxon>Tracheophyta</taxon>
        <taxon>Spermatophyta</taxon>
        <taxon>Magnoliopsida</taxon>
        <taxon>Liliopsida</taxon>
        <taxon>Poales</taxon>
        <taxon>Poaceae</taxon>
        <taxon>BOP clade</taxon>
        <taxon>Oryzoideae</taxon>
        <taxon>Oryzeae</taxon>
        <taxon>Oryzinae</taxon>
        <taxon>Oryza</taxon>
        <taxon>Oryza sativa</taxon>
    </lineage>
</organism>
<sequence>MFTGCGLFACVRRCDGGDVRKRGEAGAMSSRVAADPAGVEEEGSCKNVAAASARQLAWADVESVTGGFSSRVIGHGGFSTVYLASLSSSRLGAVKVHCSSERLHRAFRQELEVLLSLRHPHIVRLLGYCDERDEGVLVFEYAPNGDLHERLHCSEVAGGVASVLPWARRVAIAFQVAMALEYLHESRHPAVIHGDIKASNVLLDANMNAKLCDFGFAHVGFSATVGCRPSARAVMGSPGYVDPHLIRSGVATKKSDVYSFGVLLLELVTGKEAVCRDTGRRLTAAVGPMLSEGKVADVVDRRLGGEHDGAEAAVMAELAMQCIGDSPGLRPSMADVVRALQEKTSALASAVGSRLDRKMMF</sequence>
<keyword id="KW-0067">ATP-binding</keyword>
<keyword id="KW-1003">Cell membrane</keyword>
<keyword id="KW-0418">Kinase</keyword>
<keyword id="KW-0449">Lipoprotein</keyword>
<keyword id="KW-0472">Membrane</keyword>
<keyword id="KW-0547">Nucleotide-binding</keyword>
<keyword id="KW-0564">Palmitate</keyword>
<keyword id="KW-0597">Phosphoprotein</keyword>
<keyword id="KW-1185">Reference proteome</keyword>
<keyword id="KW-0723">Serine/threonine-protein kinase</keyword>
<keyword id="KW-0346">Stress response</keyword>
<keyword id="KW-0808">Transferase</keyword>
<keyword id="KW-0829">Tyrosine-protein kinase</keyword>
<proteinExistence type="evidence at protein level"/>
<comment type="function">
    <text evidence="3 4">Acts probably as a dual specificity protein kinase (Probable). Regulates hydrogen peroxide (H(2)O(2)) homeostasis and improves salt tolerance by phosphorylating tyrosine residues of CATC thus activating its catalase activity. Promotes growth at the seedling stage and prevents grain yield loss under salt stress conditions (PubMed:29581216, PubMed:38180963).</text>
</comment>
<comment type="catalytic activity">
    <reaction evidence="3">
        <text>L-seryl-[protein] + ATP = O-phospho-L-seryl-[protein] + ADP + H(+)</text>
        <dbReference type="Rhea" id="RHEA:17989"/>
        <dbReference type="Rhea" id="RHEA-COMP:9863"/>
        <dbReference type="Rhea" id="RHEA-COMP:11604"/>
        <dbReference type="ChEBI" id="CHEBI:15378"/>
        <dbReference type="ChEBI" id="CHEBI:29999"/>
        <dbReference type="ChEBI" id="CHEBI:30616"/>
        <dbReference type="ChEBI" id="CHEBI:83421"/>
        <dbReference type="ChEBI" id="CHEBI:456216"/>
        <dbReference type="EC" id="2.7.12.1"/>
    </reaction>
</comment>
<comment type="catalytic activity">
    <reaction evidence="3">
        <text>L-threonyl-[protein] + ATP = O-phospho-L-threonyl-[protein] + ADP + H(+)</text>
        <dbReference type="Rhea" id="RHEA:46608"/>
        <dbReference type="Rhea" id="RHEA-COMP:11060"/>
        <dbReference type="Rhea" id="RHEA-COMP:11605"/>
        <dbReference type="ChEBI" id="CHEBI:15378"/>
        <dbReference type="ChEBI" id="CHEBI:30013"/>
        <dbReference type="ChEBI" id="CHEBI:30616"/>
        <dbReference type="ChEBI" id="CHEBI:61977"/>
        <dbReference type="ChEBI" id="CHEBI:456216"/>
        <dbReference type="EC" id="2.7.12.1"/>
    </reaction>
</comment>
<comment type="catalytic activity">
    <reaction evidence="3">
        <text>L-tyrosyl-[protein] + ATP = O-phospho-L-tyrosyl-[protein] + ADP + H(+)</text>
        <dbReference type="Rhea" id="RHEA:10596"/>
        <dbReference type="Rhea" id="RHEA-COMP:10136"/>
        <dbReference type="Rhea" id="RHEA-COMP:20101"/>
        <dbReference type="ChEBI" id="CHEBI:15378"/>
        <dbReference type="ChEBI" id="CHEBI:30616"/>
        <dbReference type="ChEBI" id="CHEBI:46858"/>
        <dbReference type="ChEBI" id="CHEBI:61978"/>
        <dbReference type="ChEBI" id="CHEBI:456216"/>
        <dbReference type="EC" id="2.7.12.1"/>
    </reaction>
</comment>
<comment type="subunit">
    <text evidence="3">Self-interacts. Interacts with CATA, CATB and CATC at the plasma membrane.</text>
</comment>
<comment type="subcellular location">
    <subcellularLocation>
        <location evidence="3 4">Cell membrane</location>
        <topology evidence="3 4">Lipid-anchor</topology>
    </subcellularLocation>
</comment>
<comment type="tissue specificity">
    <text evidence="2 3">Accumulates in seeds (PubMed:19825577). Mainly expressed in young roots, and, to a lower extent, in leaf veins, seedlings, stems, leaf sheath and young spikelet (PubMed:29581216).</text>
</comment>
<comment type="induction">
    <text evidence="2 3">By cold and dehydration (PubMed:19825577). Induced by salt (NaCl) and oxidative (H(2)O(2)) stresses (PubMed:19825577, PubMed:29581216).</text>
</comment>
<comment type="PTM">
    <text evidence="3 4">Palmitoylated. Palmotylation at Cys-5, Cys-10 and Cys-14 by DHHC9 is required for plasma membrane targeting and STRK1 function (PubMed:38180963).</text>
</comment>
<comment type="PTM">
    <text evidence="3">Autophosphorylated.</text>
</comment>
<comment type="disruption phenotype">
    <text evidence="3">Increased sensitivity to salt (NaCl) stress with increased oxidative attack on membrane lipids and higher intracellular Na(+)/K(+) ratio associated with reduced phosphorylation of CATC.</text>
</comment>
<comment type="similarity">
    <text evidence="1">Belongs to the protein kinase superfamily. Ser/Thr protein kinase family.</text>
</comment>
<gene>
    <name evidence="6" type="primary">STRK1</name>
    <name evidence="5" type="synonym">RLCK154</name>
    <name evidence="5" type="ordered locus">LOC_Os04g45730</name>
    <name evidence="7" type="ordered locus">Os04g0540900</name>
    <name evidence="10" type="ORF">H0115B09.7</name>
    <name evidence="11" type="ORF">OsJ_15629</name>
    <name evidence="9" type="ORF">OSJNBa0011L07.13</name>
    <name evidence="8" type="ORF">OSNPB_040540900</name>
</gene>
<dbReference type="EC" id="2.7.12.1" evidence="3"/>
<dbReference type="EMBL" id="AL606587">
    <property type="protein sequence ID" value="CAE02789.2"/>
    <property type="molecule type" value="Genomic_DNA"/>
</dbReference>
<dbReference type="EMBL" id="CR855197">
    <property type="protein sequence ID" value="CAH67395.1"/>
    <property type="molecule type" value="Genomic_DNA"/>
</dbReference>
<dbReference type="EMBL" id="AP008210">
    <property type="protein sequence ID" value="BAF15357.1"/>
    <property type="molecule type" value="Genomic_DNA"/>
</dbReference>
<dbReference type="EMBL" id="AP014960">
    <property type="protein sequence ID" value="BAS90293.1"/>
    <property type="molecule type" value="Genomic_DNA"/>
</dbReference>
<dbReference type="EMBL" id="CM000141">
    <property type="protein sequence ID" value="EAZ31493.1"/>
    <property type="molecule type" value="Genomic_DNA"/>
</dbReference>
<dbReference type="EMBL" id="AK066397">
    <property type="protein sequence ID" value="BAG89950.1"/>
    <property type="molecule type" value="mRNA"/>
</dbReference>
<dbReference type="SMR" id="Q7XR88"/>
<dbReference type="FunCoup" id="Q7XR88">
    <property type="interactions" value="333"/>
</dbReference>
<dbReference type="STRING" id="39947.Q7XR88"/>
<dbReference type="PaxDb" id="39947-Q7XR88"/>
<dbReference type="EnsemblPlants" id="Os04t0540900-01">
    <property type="protein sequence ID" value="Os04t0540900-01"/>
    <property type="gene ID" value="Os04g0540900"/>
</dbReference>
<dbReference type="Gramene" id="Os04t0540900-01">
    <property type="protein sequence ID" value="Os04t0540900-01"/>
    <property type="gene ID" value="Os04g0540900"/>
</dbReference>
<dbReference type="KEGG" id="dosa:Os04g0540900"/>
<dbReference type="KEGG" id="osa:4336539"/>
<dbReference type="eggNOG" id="KOG1187">
    <property type="taxonomic scope" value="Eukaryota"/>
</dbReference>
<dbReference type="HOGENOM" id="CLU_000288_21_4_1"/>
<dbReference type="InParanoid" id="Q7XR88"/>
<dbReference type="OMA" id="LGNCDNG"/>
<dbReference type="OrthoDB" id="339325at2759"/>
<dbReference type="Proteomes" id="UP000000763">
    <property type="component" value="Chromosome 4"/>
</dbReference>
<dbReference type="Proteomes" id="UP000007752">
    <property type="component" value="Chromosome 4"/>
</dbReference>
<dbReference type="Proteomes" id="UP000059680">
    <property type="component" value="Chromosome 4"/>
</dbReference>
<dbReference type="GO" id="GO:0005886">
    <property type="term" value="C:plasma membrane"/>
    <property type="evidence" value="ECO:0000314"/>
    <property type="project" value="UniProtKB"/>
</dbReference>
<dbReference type="GO" id="GO:0005524">
    <property type="term" value="F:ATP binding"/>
    <property type="evidence" value="ECO:0007669"/>
    <property type="project" value="UniProtKB-KW"/>
</dbReference>
<dbReference type="GO" id="GO:0004672">
    <property type="term" value="F:protein kinase activity"/>
    <property type="evidence" value="ECO:0000318"/>
    <property type="project" value="GO_Central"/>
</dbReference>
<dbReference type="GO" id="GO:0106310">
    <property type="term" value="F:protein serine kinase activity"/>
    <property type="evidence" value="ECO:0007669"/>
    <property type="project" value="RHEA"/>
</dbReference>
<dbReference type="GO" id="GO:0004674">
    <property type="term" value="F:protein serine/threonine kinase activity"/>
    <property type="evidence" value="ECO:0007669"/>
    <property type="project" value="UniProtKB-KW"/>
</dbReference>
<dbReference type="GO" id="GO:0004712">
    <property type="term" value="F:protein serine/threonine/tyrosine kinase activity"/>
    <property type="evidence" value="ECO:0007669"/>
    <property type="project" value="UniProtKB-EC"/>
</dbReference>
<dbReference type="GO" id="GO:0004713">
    <property type="term" value="F:protein tyrosine kinase activity"/>
    <property type="evidence" value="ECO:0000314"/>
    <property type="project" value="UniProtKB"/>
</dbReference>
<dbReference type="GO" id="GO:0010310">
    <property type="term" value="P:regulation of hydrogen peroxide metabolic process"/>
    <property type="evidence" value="ECO:0000315"/>
    <property type="project" value="UniProtKB"/>
</dbReference>
<dbReference type="GO" id="GO:1902882">
    <property type="term" value="P:regulation of response to oxidative stress"/>
    <property type="evidence" value="ECO:0000315"/>
    <property type="project" value="UniProtKB"/>
</dbReference>
<dbReference type="GO" id="GO:1901000">
    <property type="term" value="P:regulation of response to salt stress"/>
    <property type="evidence" value="ECO:0000315"/>
    <property type="project" value="UniProtKB"/>
</dbReference>
<dbReference type="GO" id="GO:0009409">
    <property type="term" value="P:response to cold"/>
    <property type="evidence" value="ECO:0000270"/>
    <property type="project" value="UniProtKB"/>
</dbReference>
<dbReference type="GO" id="GO:0006979">
    <property type="term" value="P:response to oxidative stress"/>
    <property type="evidence" value="ECO:0000270"/>
    <property type="project" value="UniProtKB"/>
</dbReference>
<dbReference type="GO" id="GO:1902074">
    <property type="term" value="P:response to salt"/>
    <property type="evidence" value="ECO:0000270"/>
    <property type="project" value="UniProtKB"/>
</dbReference>
<dbReference type="GO" id="GO:0009651">
    <property type="term" value="P:response to salt stress"/>
    <property type="evidence" value="ECO:0000270"/>
    <property type="project" value="UniProtKB"/>
</dbReference>
<dbReference type="GO" id="GO:0009414">
    <property type="term" value="P:response to water deprivation"/>
    <property type="evidence" value="ECO:0000270"/>
    <property type="project" value="UniProtKB"/>
</dbReference>
<dbReference type="GO" id="GO:0007165">
    <property type="term" value="P:signal transduction"/>
    <property type="evidence" value="ECO:0000318"/>
    <property type="project" value="GO_Central"/>
</dbReference>
<dbReference type="CDD" id="cd14066">
    <property type="entry name" value="STKc_IRAK"/>
    <property type="match status" value="1"/>
</dbReference>
<dbReference type="FunFam" id="1.10.510.10:FF:000514">
    <property type="entry name" value="Putative receptor-like protein kinase"/>
    <property type="match status" value="1"/>
</dbReference>
<dbReference type="FunFam" id="3.30.200.20:FF:000419">
    <property type="entry name" value="Putative receptor-like protein kinase"/>
    <property type="match status" value="1"/>
</dbReference>
<dbReference type="Gene3D" id="3.30.200.20">
    <property type="entry name" value="Phosphorylase Kinase, domain 1"/>
    <property type="match status" value="1"/>
</dbReference>
<dbReference type="Gene3D" id="1.10.510.10">
    <property type="entry name" value="Transferase(Phosphotransferase) domain 1"/>
    <property type="match status" value="1"/>
</dbReference>
<dbReference type="InterPro" id="IPR011009">
    <property type="entry name" value="Kinase-like_dom_sf"/>
</dbReference>
<dbReference type="InterPro" id="IPR000719">
    <property type="entry name" value="Prot_kinase_dom"/>
</dbReference>
<dbReference type="InterPro" id="IPR008271">
    <property type="entry name" value="Ser/Thr_kinase_AS"/>
</dbReference>
<dbReference type="PANTHER" id="PTHR27001">
    <property type="entry name" value="OS01G0253100 PROTEIN"/>
    <property type="match status" value="1"/>
</dbReference>
<dbReference type="PANTHER" id="PTHR27001:SF660">
    <property type="entry name" value="SALT TOLERANCE RECEPTOR-LIKE CYTOPLASMIC KINASE 1"/>
    <property type="match status" value="1"/>
</dbReference>
<dbReference type="Pfam" id="PF00069">
    <property type="entry name" value="Pkinase"/>
    <property type="match status" value="1"/>
</dbReference>
<dbReference type="SMART" id="SM00220">
    <property type="entry name" value="S_TKc"/>
    <property type="match status" value="1"/>
</dbReference>
<dbReference type="SUPFAM" id="SSF56112">
    <property type="entry name" value="Protein kinase-like (PK-like)"/>
    <property type="match status" value="1"/>
</dbReference>
<dbReference type="PROSITE" id="PS50011">
    <property type="entry name" value="PROTEIN_KINASE_DOM"/>
    <property type="match status" value="1"/>
</dbReference>
<dbReference type="PROSITE" id="PS00108">
    <property type="entry name" value="PROTEIN_KINASE_ST"/>
    <property type="match status" value="1"/>
</dbReference>
<accession>Q7XR88</accession>
<accession>Q01IP5</accession>
<protein>
    <recommendedName>
        <fullName evidence="6">Salt tolerance receptor-like cytoplasmic kinase 1</fullName>
        <ecNumber evidence="3">2.7.12.1</ecNumber>
    </recommendedName>
    <alternativeName>
        <fullName evidence="5">Receptor-like cytoplasmic kinase 154</fullName>
        <shortName evidence="5">OsRLCK154</shortName>
    </alternativeName>
</protein>
<evidence type="ECO:0000255" key="1">
    <source>
        <dbReference type="PROSITE-ProRule" id="PRU00159"/>
    </source>
</evidence>
<evidence type="ECO:0000269" key="2">
    <source>
    </source>
</evidence>
<evidence type="ECO:0000269" key="3">
    <source>
    </source>
</evidence>
<evidence type="ECO:0000269" key="4">
    <source>
    </source>
</evidence>
<evidence type="ECO:0000303" key="5">
    <source>
    </source>
</evidence>
<evidence type="ECO:0000303" key="6">
    <source>
    </source>
</evidence>
<evidence type="ECO:0000312" key="7">
    <source>
        <dbReference type="EMBL" id="BAF15357.1"/>
    </source>
</evidence>
<evidence type="ECO:0000312" key="8">
    <source>
        <dbReference type="EMBL" id="BAS90293.1"/>
    </source>
</evidence>
<evidence type="ECO:0000312" key="9">
    <source>
        <dbReference type="EMBL" id="CAE02789.2"/>
    </source>
</evidence>
<evidence type="ECO:0000312" key="10">
    <source>
        <dbReference type="EMBL" id="CAH67395.1"/>
    </source>
</evidence>
<evidence type="ECO:0000312" key="11">
    <source>
        <dbReference type="EMBL" id="EAZ31493.1"/>
    </source>
</evidence>
<name>STRK1_ORYSJ</name>
<reference key="1">
    <citation type="journal article" date="2002" name="Nature">
        <title>Sequence and analysis of rice chromosome 4.</title>
        <authorList>
            <person name="Feng Q."/>
            <person name="Zhang Y."/>
            <person name="Hao P."/>
            <person name="Wang S."/>
            <person name="Fu G."/>
            <person name="Huang Y."/>
            <person name="Li Y."/>
            <person name="Zhu J."/>
            <person name="Liu Y."/>
            <person name="Hu X."/>
            <person name="Jia P."/>
            <person name="Zhang Y."/>
            <person name="Zhao Q."/>
            <person name="Ying K."/>
            <person name="Yu S."/>
            <person name="Tang Y."/>
            <person name="Weng Q."/>
            <person name="Zhang L."/>
            <person name="Lu Y."/>
            <person name="Mu J."/>
            <person name="Lu Y."/>
            <person name="Zhang L.S."/>
            <person name="Yu Z."/>
            <person name="Fan D."/>
            <person name="Liu X."/>
            <person name="Lu T."/>
            <person name="Li C."/>
            <person name="Wu Y."/>
            <person name="Sun T."/>
            <person name="Lei H."/>
            <person name="Li T."/>
            <person name="Hu H."/>
            <person name="Guan J."/>
            <person name="Wu M."/>
            <person name="Zhang R."/>
            <person name="Zhou B."/>
            <person name="Chen Z."/>
            <person name="Chen L."/>
            <person name="Jin Z."/>
            <person name="Wang R."/>
            <person name="Yin H."/>
            <person name="Cai Z."/>
            <person name="Ren S."/>
            <person name="Lv G."/>
            <person name="Gu W."/>
            <person name="Zhu G."/>
            <person name="Tu Y."/>
            <person name="Jia J."/>
            <person name="Zhang Y."/>
            <person name="Chen J."/>
            <person name="Kang H."/>
            <person name="Chen X."/>
            <person name="Shao C."/>
            <person name="Sun Y."/>
            <person name="Hu Q."/>
            <person name="Zhang X."/>
            <person name="Zhang W."/>
            <person name="Wang L."/>
            <person name="Ding C."/>
            <person name="Sheng H."/>
            <person name="Gu J."/>
            <person name="Chen S."/>
            <person name="Ni L."/>
            <person name="Zhu F."/>
            <person name="Chen W."/>
            <person name="Lan L."/>
            <person name="Lai Y."/>
            <person name="Cheng Z."/>
            <person name="Gu M."/>
            <person name="Jiang J."/>
            <person name="Li J."/>
            <person name="Hong G."/>
            <person name="Xue Y."/>
            <person name="Han B."/>
        </authorList>
    </citation>
    <scope>NUCLEOTIDE SEQUENCE [LARGE SCALE GENOMIC DNA]</scope>
    <source>
        <strain>cv. Nipponbare</strain>
    </source>
</reference>
<reference key="2">
    <citation type="journal article" date="2005" name="Nature">
        <title>The map-based sequence of the rice genome.</title>
        <authorList>
            <consortium name="International rice genome sequencing project (IRGSP)"/>
        </authorList>
    </citation>
    <scope>NUCLEOTIDE SEQUENCE [LARGE SCALE GENOMIC DNA]</scope>
    <source>
        <strain>cv. Nipponbare</strain>
    </source>
</reference>
<reference key="3">
    <citation type="journal article" date="2008" name="Nucleic Acids Res.">
        <title>The rice annotation project database (RAP-DB): 2008 update.</title>
        <authorList>
            <consortium name="The rice annotation project (RAP)"/>
        </authorList>
    </citation>
    <scope>GENOME REANNOTATION</scope>
    <source>
        <strain>cv. Nipponbare</strain>
    </source>
</reference>
<reference key="4">
    <citation type="journal article" date="2013" name="Rice">
        <title>Improvement of the Oryza sativa Nipponbare reference genome using next generation sequence and optical map data.</title>
        <authorList>
            <person name="Kawahara Y."/>
            <person name="de la Bastide M."/>
            <person name="Hamilton J.P."/>
            <person name="Kanamori H."/>
            <person name="McCombie W.R."/>
            <person name="Ouyang S."/>
            <person name="Schwartz D.C."/>
            <person name="Tanaka T."/>
            <person name="Wu J."/>
            <person name="Zhou S."/>
            <person name="Childs K.L."/>
            <person name="Davidson R.M."/>
            <person name="Lin H."/>
            <person name="Quesada-Ocampo L."/>
            <person name="Vaillancourt B."/>
            <person name="Sakai H."/>
            <person name="Lee S.S."/>
            <person name="Kim J."/>
            <person name="Numa H."/>
            <person name="Itoh T."/>
            <person name="Buell C.R."/>
            <person name="Matsumoto T."/>
        </authorList>
    </citation>
    <scope>GENOME REANNOTATION</scope>
    <source>
        <strain>cv. Nipponbare</strain>
    </source>
</reference>
<reference key="5">
    <citation type="journal article" date="2005" name="PLoS Biol.">
        <title>The genomes of Oryza sativa: a history of duplications.</title>
        <authorList>
            <person name="Yu J."/>
            <person name="Wang J."/>
            <person name="Lin W."/>
            <person name="Li S."/>
            <person name="Li H."/>
            <person name="Zhou J."/>
            <person name="Ni P."/>
            <person name="Dong W."/>
            <person name="Hu S."/>
            <person name="Zeng C."/>
            <person name="Zhang J."/>
            <person name="Zhang Y."/>
            <person name="Li R."/>
            <person name="Xu Z."/>
            <person name="Li S."/>
            <person name="Li X."/>
            <person name="Zheng H."/>
            <person name="Cong L."/>
            <person name="Lin L."/>
            <person name="Yin J."/>
            <person name="Geng J."/>
            <person name="Li G."/>
            <person name="Shi J."/>
            <person name="Liu J."/>
            <person name="Lv H."/>
            <person name="Li J."/>
            <person name="Wang J."/>
            <person name="Deng Y."/>
            <person name="Ran L."/>
            <person name="Shi X."/>
            <person name="Wang X."/>
            <person name="Wu Q."/>
            <person name="Li C."/>
            <person name="Ren X."/>
            <person name="Wang J."/>
            <person name="Wang X."/>
            <person name="Li D."/>
            <person name="Liu D."/>
            <person name="Zhang X."/>
            <person name="Ji Z."/>
            <person name="Zhao W."/>
            <person name="Sun Y."/>
            <person name="Zhang Z."/>
            <person name="Bao J."/>
            <person name="Han Y."/>
            <person name="Dong L."/>
            <person name="Ji J."/>
            <person name="Chen P."/>
            <person name="Wu S."/>
            <person name="Liu J."/>
            <person name="Xiao Y."/>
            <person name="Bu D."/>
            <person name="Tan J."/>
            <person name="Yang L."/>
            <person name="Ye C."/>
            <person name="Zhang J."/>
            <person name="Xu J."/>
            <person name="Zhou Y."/>
            <person name="Yu Y."/>
            <person name="Zhang B."/>
            <person name="Zhuang S."/>
            <person name="Wei H."/>
            <person name="Liu B."/>
            <person name="Lei M."/>
            <person name="Yu H."/>
            <person name="Li Y."/>
            <person name="Xu H."/>
            <person name="Wei S."/>
            <person name="He X."/>
            <person name="Fang L."/>
            <person name="Zhang Z."/>
            <person name="Zhang Y."/>
            <person name="Huang X."/>
            <person name="Su Z."/>
            <person name="Tong W."/>
            <person name="Li J."/>
            <person name="Tong Z."/>
            <person name="Li S."/>
            <person name="Ye J."/>
            <person name="Wang L."/>
            <person name="Fang L."/>
            <person name="Lei T."/>
            <person name="Chen C.-S."/>
            <person name="Chen H.-C."/>
            <person name="Xu Z."/>
            <person name="Li H."/>
            <person name="Huang H."/>
            <person name="Zhang F."/>
            <person name="Xu H."/>
            <person name="Li N."/>
            <person name="Zhao C."/>
            <person name="Li S."/>
            <person name="Dong L."/>
            <person name="Huang Y."/>
            <person name="Li L."/>
            <person name="Xi Y."/>
            <person name="Qi Q."/>
            <person name="Li W."/>
            <person name="Zhang B."/>
            <person name="Hu W."/>
            <person name="Zhang Y."/>
            <person name="Tian X."/>
            <person name="Jiao Y."/>
            <person name="Liang X."/>
            <person name="Jin J."/>
            <person name="Gao L."/>
            <person name="Zheng W."/>
            <person name="Hao B."/>
            <person name="Liu S.-M."/>
            <person name="Wang W."/>
            <person name="Yuan L."/>
            <person name="Cao M."/>
            <person name="McDermott J."/>
            <person name="Samudrala R."/>
            <person name="Wang J."/>
            <person name="Wong G.K.-S."/>
            <person name="Yang H."/>
        </authorList>
    </citation>
    <scope>NUCLEOTIDE SEQUENCE [LARGE SCALE GENOMIC DNA]</scope>
    <source>
        <strain>cv. Nipponbare</strain>
    </source>
</reference>
<reference key="6">
    <citation type="journal article" date="2003" name="Science">
        <title>Collection, mapping, and annotation of over 28,000 cDNA clones from japonica rice.</title>
        <authorList>
            <consortium name="The rice full-length cDNA consortium"/>
        </authorList>
    </citation>
    <scope>NUCLEOTIDE SEQUENCE [LARGE SCALE MRNA]</scope>
    <source>
        <strain>cv. Nipponbare</strain>
    </source>
</reference>
<reference key="7">
    <citation type="journal article" date="2008" name="Mol. Plant">
        <title>The receptor-like cytoplasmic kinase (OsRLCK) gene family in rice: organization, phylogenetic relationship, and expression during development and stress.</title>
        <authorList>
            <person name="Vij S."/>
            <person name="Giri J."/>
            <person name="Dansana P.K."/>
            <person name="Kapoor S."/>
            <person name="Tyagi A.K."/>
        </authorList>
    </citation>
    <scope>TISSUE SPECIFICITY</scope>
    <scope>INDUCTION BY ABIOTIC STRESSES</scope>
    <scope>GENE FAMILY</scope>
    <scope>NOMENCLATURE</scope>
</reference>
<reference key="8">
    <citation type="journal article" date="2018" name="Plant Cell">
        <title>The receptor-like cytoplasmic kinase STRK1 phosphorylates and activates CatC, thereby regulating H2O2 homeostasis and improving salt tolerance in rice.</title>
        <authorList>
            <person name="Zhou Y.-B."/>
            <person name="Liu C."/>
            <person name="Tang D.-Y."/>
            <person name="Yan L."/>
            <person name="Wang D."/>
            <person name="Yang Y.-Z."/>
            <person name="Gui J.-S."/>
            <person name="Zhao X.-Y."/>
            <person name="Li L.-G."/>
            <person name="Tang X.-D."/>
            <person name="Yu F."/>
            <person name="Li J.-L."/>
            <person name="Liu L.-L."/>
            <person name="Zhu Y.-H."/>
            <person name="Lin J.-Z."/>
            <person name="Liu X.-M."/>
        </authorList>
    </citation>
    <scope>FUNCTION</scope>
    <scope>DISRUPTION PHENOTYPE</scope>
    <scope>MUTAGENESIS OF CYS-5; CYS-10; CYS-14 AND LYS-95</scope>
    <scope>PALMITOYLATION</scope>
    <scope>AUTOPHOSPHORYLATION</scope>
    <scope>SUBCELLULAR LOCATION</scope>
    <scope>INDUCTION BY SALT STRESS</scope>
    <scope>TISSUE SPECIFICITY</scope>
    <scope>INTERACTION WITH CATA; CATB AND CATC</scope>
    <scope>CATALYTIC ACTIVITY</scope>
    <source>
        <strain>cv. Kitaake</strain>
    </source>
</reference>
<reference key="9">
    <citation type="journal article" date="2024" name="Plant Cell">
        <title>The zinc finger protein DHHC09 S-acylates the kinase STRK1 to regulate H2O2 homeostasis and promote salt tolerance in rice.</title>
        <authorList>
            <person name="Tian Y."/>
            <person name="Zeng H."/>
            <person name="Wu J.C."/>
            <person name="Dai G.X."/>
            <person name="Zheng H.P."/>
            <person name="Liu C."/>
            <person name="Wang Y."/>
            <person name="Zhou Z.K."/>
            <person name="Tang D.Y."/>
            <person name="Deng G.F."/>
            <person name="Tang W.B."/>
            <person name="Liu X.M."/>
            <person name="Lin J.Z."/>
        </authorList>
    </citation>
    <scope>FUNCTION</scope>
    <scope>SUBCELLULAR LOCATION</scope>
    <scope>PALMITOYLATION AT CYS-5; CYS-10 AND CYS-14 BY DHHC9</scope>
    <scope>MUTAGENESIS OF CYS-5; CYS-10 AND CYS-14</scope>
</reference>